<organism>
    <name type="scientific">Pseudomonas fluorescens (strain SBW25)</name>
    <dbReference type="NCBI Taxonomy" id="216595"/>
    <lineage>
        <taxon>Bacteria</taxon>
        <taxon>Pseudomonadati</taxon>
        <taxon>Pseudomonadota</taxon>
        <taxon>Gammaproteobacteria</taxon>
        <taxon>Pseudomonadales</taxon>
        <taxon>Pseudomonadaceae</taxon>
        <taxon>Pseudomonas</taxon>
    </lineage>
</organism>
<gene>
    <name evidence="1" type="primary">ung</name>
    <name type="ordered locus">PFLU_1441</name>
</gene>
<sequence length="230" mass="25837">MTEDDRIKLEPSWKHALRDQFEQPYMAQLREFLRQEHAAGKEIYPPGPLIFNALNSTPLDKVKVVILGQDPYHGPGQAHGLCFSVQPGVPAPPSLVNIYKELKRDLNIDIPNHGYLQSWADQGVLMLNTTMTVERANANAHAGKGWQFFTDRIIEVVSEHQPHLVFLLWGAHAQGKQKLIDATKHLVLTSVHPSPLSAYRGFLGCGHFSRTNKFLEQNGETPINWVLPPA</sequence>
<keyword id="KW-0963">Cytoplasm</keyword>
<keyword id="KW-0227">DNA damage</keyword>
<keyword id="KW-0234">DNA repair</keyword>
<keyword id="KW-0378">Hydrolase</keyword>
<accession>C3KDS6</accession>
<reference key="1">
    <citation type="journal article" date="2009" name="Genome Biol.">
        <title>Genomic and genetic analyses of diversity and plant interactions of Pseudomonas fluorescens.</title>
        <authorList>
            <person name="Silby M.W."/>
            <person name="Cerdeno-Tarraga A.M."/>
            <person name="Vernikos G.S."/>
            <person name="Giddens S.R."/>
            <person name="Jackson R.W."/>
            <person name="Preston G.M."/>
            <person name="Zhang X.-X."/>
            <person name="Moon C.D."/>
            <person name="Gehrig S.M."/>
            <person name="Godfrey S.A.C."/>
            <person name="Knight C.G."/>
            <person name="Malone J.G."/>
            <person name="Robinson Z."/>
            <person name="Spiers A.J."/>
            <person name="Harris S."/>
            <person name="Challis G.L."/>
            <person name="Yaxley A.M."/>
            <person name="Harris D."/>
            <person name="Seeger K."/>
            <person name="Murphy L."/>
            <person name="Rutter S."/>
            <person name="Squares R."/>
            <person name="Quail M.A."/>
            <person name="Saunders E."/>
            <person name="Mavromatis K."/>
            <person name="Brettin T.S."/>
            <person name="Bentley S.D."/>
            <person name="Hothersall J."/>
            <person name="Stephens E."/>
            <person name="Thomas C.M."/>
            <person name="Parkhill J."/>
            <person name="Levy S.B."/>
            <person name="Rainey P.B."/>
            <person name="Thomson N.R."/>
        </authorList>
    </citation>
    <scope>NUCLEOTIDE SEQUENCE [LARGE SCALE GENOMIC DNA]</scope>
    <source>
        <strain>SBW25</strain>
    </source>
</reference>
<comment type="function">
    <text evidence="1">Excises uracil residues from the DNA which can arise as a result of misincorporation of dUMP residues by DNA polymerase or due to deamination of cytosine.</text>
</comment>
<comment type="catalytic activity">
    <reaction evidence="1">
        <text>Hydrolyzes single-stranded DNA or mismatched double-stranded DNA and polynucleotides, releasing free uracil.</text>
        <dbReference type="EC" id="3.2.2.27"/>
    </reaction>
</comment>
<comment type="subcellular location">
    <subcellularLocation>
        <location evidence="1">Cytoplasm</location>
    </subcellularLocation>
</comment>
<comment type="similarity">
    <text evidence="1">Belongs to the uracil-DNA glycosylase (UDG) superfamily. UNG family.</text>
</comment>
<dbReference type="EC" id="3.2.2.27" evidence="1"/>
<dbReference type="EMBL" id="AM181176">
    <property type="protein sequence ID" value="CAY47694.1"/>
    <property type="molecule type" value="Genomic_DNA"/>
</dbReference>
<dbReference type="RefSeq" id="WP_012722744.1">
    <property type="nucleotide sequence ID" value="NC_012660.1"/>
</dbReference>
<dbReference type="SMR" id="C3KDS6"/>
<dbReference type="STRING" id="294.SRM1_01338"/>
<dbReference type="GeneID" id="93463060"/>
<dbReference type="PATRIC" id="fig|216595.4.peg.1669"/>
<dbReference type="eggNOG" id="COG0692">
    <property type="taxonomic scope" value="Bacteria"/>
</dbReference>
<dbReference type="HOGENOM" id="CLU_032162_3_1_6"/>
<dbReference type="OrthoDB" id="9804372at2"/>
<dbReference type="GO" id="GO:0005737">
    <property type="term" value="C:cytoplasm"/>
    <property type="evidence" value="ECO:0007669"/>
    <property type="project" value="UniProtKB-SubCell"/>
</dbReference>
<dbReference type="GO" id="GO:0004844">
    <property type="term" value="F:uracil DNA N-glycosylase activity"/>
    <property type="evidence" value="ECO:0007669"/>
    <property type="project" value="UniProtKB-UniRule"/>
</dbReference>
<dbReference type="GO" id="GO:0097510">
    <property type="term" value="P:base-excision repair, AP site formation via deaminated base removal"/>
    <property type="evidence" value="ECO:0007669"/>
    <property type="project" value="TreeGrafter"/>
</dbReference>
<dbReference type="CDD" id="cd10027">
    <property type="entry name" value="UDG-F1-like"/>
    <property type="match status" value="1"/>
</dbReference>
<dbReference type="FunFam" id="3.40.470.10:FF:000001">
    <property type="entry name" value="Uracil-DNA glycosylase"/>
    <property type="match status" value="1"/>
</dbReference>
<dbReference type="Gene3D" id="3.40.470.10">
    <property type="entry name" value="Uracil-DNA glycosylase-like domain"/>
    <property type="match status" value="1"/>
</dbReference>
<dbReference type="HAMAP" id="MF_00148">
    <property type="entry name" value="UDG"/>
    <property type="match status" value="1"/>
</dbReference>
<dbReference type="InterPro" id="IPR002043">
    <property type="entry name" value="UDG_fam1"/>
</dbReference>
<dbReference type="InterPro" id="IPR018085">
    <property type="entry name" value="Ura-DNA_Glyclase_AS"/>
</dbReference>
<dbReference type="InterPro" id="IPR005122">
    <property type="entry name" value="Uracil-DNA_glycosylase-like"/>
</dbReference>
<dbReference type="InterPro" id="IPR036895">
    <property type="entry name" value="Uracil-DNA_glycosylase-like_sf"/>
</dbReference>
<dbReference type="NCBIfam" id="NF003588">
    <property type="entry name" value="PRK05254.1-1"/>
    <property type="match status" value="1"/>
</dbReference>
<dbReference type="NCBIfam" id="NF003589">
    <property type="entry name" value="PRK05254.1-2"/>
    <property type="match status" value="1"/>
</dbReference>
<dbReference type="NCBIfam" id="NF003591">
    <property type="entry name" value="PRK05254.1-4"/>
    <property type="match status" value="1"/>
</dbReference>
<dbReference type="NCBIfam" id="NF003592">
    <property type="entry name" value="PRK05254.1-5"/>
    <property type="match status" value="1"/>
</dbReference>
<dbReference type="NCBIfam" id="TIGR00628">
    <property type="entry name" value="ung"/>
    <property type="match status" value="1"/>
</dbReference>
<dbReference type="PANTHER" id="PTHR11264">
    <property type="entry name" value="URACIL-DNA GLYCOSYLASE"/>
    <property type="match status" value="1"/>
</dbReference>
<dbReference type="PANTHER" id="PTHR11264:SF0">
    <property type="entry name" value="URACIL-DNA GLYCOSYLASE"/>
    <property type="match status" value="1"/>
</dbReference>
<dbReference type="Pfam" id="PF03167">
    <property type="entry name" value="UDG"/>
    <property type="match status" value="1"/>
</dbReference>
<dbReference type="SMART" id="SM00986">
    <property type="entry name" value="UDG"/>
    <property type="match status" value="1"/>
</dbReference>
<dbReference type="SMART" id="SM00987">
    <property type="entry name" value="UreE_C"/>
    <property type="match status" value="1"/>
</dbReference>
<dbReference type="SUPFAM" id="SSF52141">
    <property type="entry name" value="Uracil-DNA glycosylase-like"/>
    <property type="match status" value="1"/>
</dbReference>
<dbReference type="PROSITE" id="PS00130">
    <property type="entry name" value="U_DNA_GLYCOSYLASE"/>
    <property type="match status" value="1"/>
</dbReference>
<protein>
    <recommendedName>
        <fullName evidence="1">Uracil-DNA glycosylase</fullName>
        <shortName evidence="1">UDG</shortName>
        <ecNumber evidence="1">3.2.2.27</ecNumber>
    </recommendedName>
</protein>
<proteinExistence type="inferred from homology"/>
<name>UNG_PSEFS</name>
<evidence type="ECO:0000255" key="1">
    <source>
        <dbReference type="HAMAP-Rule" id="MF_00148"/>
    </source>
</evidence>
<feature type="chain" id="PRO_1000203379" description="Uracil-DNA glycosylase">
    <location>
        <begin position="1"/>
        <end position="230"/>
    </location>
</feature>
<feature type="active site" description="Proton acceptor" evidence="1">
    <location>
        <position position="70"/>
    </location>
</feature>